<comment type="function">
    <text evidence="2">Plays an essential role in viral RNA transcription and replication by forming the heterotrimeric polymerase complex together with PB1 and PB2 subunits. The complex transcribes viral mRNAs by using a unique mechanism called cap-snatching. It consists in the hijacking and cleavage of host capped pre-mRNAs. These short capped RNAs are then used as primers for viral mRNAs. The PB2 subunit is responsible for the binding of the 5' cap of cellular pre-mRNAs which are subsequently cleaved after 10-13 nucleotides by the PA subunit that carries the endonuclease activity.</text>
</comment>
<comment type="cofactor">
    <cofactor evidence="2">
        <name>Mn(2+)</name>
        <dbReference type="ChEBI" id="CHEBI:29035"/>
    </cofactor>
    <text evidence="2">Binds 2 manganese ions per subunit.</text>
</comment>
<comment type="subunit">
    <text evidence="1 2">Influenza RNA polymerase is composed of three subunits: PB1, PB2 and PA. Interacts (via C-terminus) with PB1 (via N-terminus).</text>
</comment>
<comment type="subcellular location">
    <subcellularLocation>
        <location evidence="2">Host cytoplasm</location>
    </subcellularLocation>
    <subcellularLocation>
        <location evidence="2">Host nucleus</location>
    </subcellularLocation>
    <text evidence="1 2">PB1 and PA are transported in the host nucleus as a complex.</text>
</comment>
<comment type="alternative products">
    <event type="ribosomal frameshifting"/>
    <isoform>
        <id>P67921-1</id>
        <name>PA</name>
        <sequence type="displayed"/>
    </isoform>
    <isoform>
        <id>P0DJS4-1</id>
        <name>PA-X</name>
        <sequence type="external"/>
    </isoform>
</comment>
<comment type="PTM">
    <text evidence="1 2">Phosphorylated on serines and threonines by host kinases, including human casein kinase II.</text>
</comment>
<comment type="similarity">
    <text evidence="2">Belongs to the influenza viruses PA family.</text>
</comment>
<gene>
    <name evidence="2" type="primary">PA</name>
</gene>
<sequence length="716" mass="82854">MEEFVRQCFNPMIVELAEKAMKEYGEDRKIETNKFAAICTHLEVCFMYSDFHFINEQGESIIVELDDPNALLKHRFEIIEGRDRTMAWTVVNSICNTTGAEKPKFLPDLYDYKENRFIEIGVTRREVHIYYLEKANKIKSEKTHIHIFSFTGEEMATKADYTLDEESRARIKTRLFTIRQEMASRGLWDSFRQSERGEETIEERFEITGTMRRLADQSLPPNFSCLENFRAYVDGFEPNGYIEGKLSQMSKEVNAKIEPFLKTTPRPIKLPDGPPCSQRSKFLLMDALKLSIEDPSHEGEGIPLYDAIKCMRTFFGWKEPYVVKPHDKGINPNYLLSWKQLLAELQDIENEEKIPRTKNMKKTSQLKWALGENMAPEKVDFDDCRDISDLKQYDSDEPELRSLSSWIQNEFNKACELTDSIWIELDEIGEDVAPIEHIASMRRNYFTAEVSQCRATEYIMKGVYINTALLNASCAAMDDFQLIPMISKCRTKEGRRKTNLYGFIIKGRSHLRNDTDVVNFVSMEFSLTDPRLEPHKWEKYCVLEIGDMLLRSAIGQVSRPMFLYVRTNGTSKIKMKWGMEMRRCLLQSLQQIESMIEAESSVKEKDMTKEFFENKSETWPIGESPKGVEEGSIGKVCRTLLAKSVFNSLYASPQLEGFSAESRKLLLVVQALRDNLEPGTFDLGGLYEAIEECLINDPWVLLNASWFNSFLTHALR</sequence>
<name>PA_I57A2</name>
<reference key="1">
    <citation type="journal article" date="1992" name="Virology">
        <title>Sequence changes in the live attenuated, cold-adapted variants of influenza A/Leningrad/134/57 (H2N2) virus.</title>
        <authorList>
            <person name="Klimov A.I."/>
            <person name="Cox N.J."/>
            <person name="Yotov W.V."/>
            <person name="Rocha E."/>
            <person name="Alexandrova G.I."/>
            <person name="Kendal A.P."/>
        </authorList>
    </citation>
    <scope>NUCLEOTIDE SEQUENCE [MRNA]</scope>
</reference>
<accession>P67921</accession>
<accession>P26123</accession>
<organism>
    <name type="scientific">Influenza A virus (strain A/Leningrad/134/17/1957 H2N2)</name>
    <dbReference type="NCBI Taxonomy" id="380984"/>
    <lineage>
        <taxon>Viruses</taxon>
        <taxon>Riboviria</taxon>
        <taxon>Orthornavirae</taxon>
        <taxon>Negarnaviricota</taxon>
        <taxon>Polyploviricotina</taxon>
        <taxon>Insthoviricetes</taxon>
        <taxon>Articulavirales</taxon>
        <taxon>Orthomyxoviridae</taxon>
        <taxon>Alphainfluenzavirus</taxon>
        <taxon>Alphainfluenzavirus influenzae</taxon>
        <taxon>Influenza A virus</taxon>
    </lineage>
</organism>
<evidence type="ECO:0000250" key="1">
    <source>
        <dbReference type="UniProtKB" id="P03433"/>
    </source>
</evidence>
<evidence type="ECO:0000255" key="2">
    <source>
        <dbReference type="HAMAP-Rule" id="MF_04063"/>
    </source>
</evidence>
<feature type="chain" id="PRO_0000078791" description="Polymerase acidic protein">
    <location>
        <begin position="1"/>
        <end position="716"/>
    </location>
</feature>
<feature type="short sequence motif" description="Nuclear localization signal 1 (NLS1)" evidence="1 2">
    <location>
        <begin position="124"/>
        <end position="139"/>
    </location>
</feature>
<feature type="short sequence motif" description="Nuclear localization signal 2 (NLS2)" evidence="1 2">
    <location>
        <begin position="184"/>
        <end position="247"/>
    </location>
</feature>
<feature type="binding site" evidence="2">
    <location>
        <position position="41"/>
    </location>
    <ligand>
        <name>Mn(2+)</name>
        <dbReference type="ChEBI" id="CHEBI:29035"/>
        <label>1</label>
    </ligand>
</feature>
<feature type="binding site" evidence="2">
    <location>
        <position position="80"/>
    </location>
    <ligand>
        <name>Mn(2+)</name>
        <dbReference type="ChEBI" id="CHEBI:29035"/>
        <label>2</label>
    </ligand>
</feature>
<feature type="binding site" evidence="2">
    <location>
        <position position="108"/>
    </location>
    <ligand>
        <name>Mn(2+)</name>
        <dbReference type="ChEBI" id="CHEBI:29035"/>
        <label>1</label>
    </ligand>
</feature>
<feature type="binding site" evidence="2">
    <location>
        <position position="108"/>
    </location>
    <ligand>
        <name>Mn(2+)</name>
        <dbReference type="ChEBI" id="CHEBI:29035"/>
        <label>2</label>
    </ligand>
</feature>
<feature type="binding site" evidence="2">
    <location>
        <position position="119"/>
    </location>
    <ligand>
        <name>Mn(2+)</name>
        <dbReference type="ChEBI" id="CHEBI:29035"/>
        <label>1</label>
    </ligand>
</feature>
<feature type="binding site" evidence="2">
    <location>
        <position position="120"/>
    </location>
    <ligand>
        <name>Mn(2+)</name>
        <dbReference type="ChEBI" id="CHEBI:29035"/>
        <label>1</label>
    </ligand>
</feature>
<proteinExistence type="evidence at transcript level"/>
<keyword id="KW-1157">Cap snatching</keyword>
<keyword id="KW-0255">Endonuclease</keyword>
<keyword id="KW-1262">Eukaryotic host gene expression shutoff by virus</keyword>
<keyword id="KW-1191">Eukaryotic host transcription shutoff by virus</keyword>
<keyword id="KW-1035">Host cytoplasm</keyword>
<keyword id="KW-1190">Host gene expression shutoff by virus</keyword>
<keyword id="KW-1048">Host nucleus</keyword>
<keyword id="KW-0945">Host-virus interaction</keyword>
<keyword id="KW-0378">Hydrolase</keyword>
<keyword id="KW-1104">Inhibition of host RNA polymerase II by virus</keyword>
<keyword id="KW-0464">Manganese</keyword>
<keyword id="KW-0479">Metal-binding</keyword>
<keyword id="KW-0540">Nuclease</keyword>
<keyword id="KW-0597">Phosphoprotein</keyword>
<keyword id="KW-0688">Ribosomal frameshifting</keyword>
<dbReference type="EC" id="3.1.-.-" evidence="2"/>
<dbReference type="EMBL" id="M81579">
    <property type="protein sequence ID" value="AAA19208.1"/>
    <property type="molecule type" value="mRNA"/>
</dbReference>
<dbReference type="SMR" id="P67921"/>
<dbReference type="MEROPS" id="S62.001"/>
<dbReference type="GO" id="GO:0030430">
    <property type="term" value="C:host cell cytoplasm"/>
    <property type="evidence" value="ECO:0007669"/>
    <property type="project" value="UniProtKB-SubCell"/>
</dbReference>
<dbReference type="GO" id="GO:0042025">
    <property type="term" value="C:host cell nucleus"/>
    <property type="evidence" value="ECO:0007669"/>
    <property type="project" value="UniProtKB-SubCell"/>
</dbReference>
<dbReference type="GO" id="GO:0004519">
    <property type="term" value="F:endonuclease activity"/>
    <property type="evidence" value="ECO:0007669"/>
    <property type="project" value="UniProtKB-KW"/>
</dbReference>
<dbReference type="GO" id="GO:0046872">
    <property type="term" value="F:metal ion binding"/>
    <property type="evidence" value="ECO:0007669"/>
    <property type="project" value="UniProtKB-KW"/>
</dbReference>
<dbReference type="GO" id="GO:0003723">
    <property type="term" value="F:RNA binding"/>
    <property type="evidence" value="ECO:0007669"/>
    <property type="project" value="UniProtKB-UniRule"/>
</dbReference>
<dbReference type="GO" id="GO:0075526">
    <property type="term" value="P:cap snatching"/>
    <property type="evidence" value="ECO:0007669"/>
    <property type="project" value="UniProtKB-UniRule"/>
</dbReference>
<dbReference type="GO" id="GO:0006351">
    <property type="term" value="P:DNA-templated transcription"/>
    <property type="evidence" value="ECO:0007669"/>
    <property type="project" value="UniProtKB-UniRule"/>
</dbReference>
<dbReference type="GO" id="GO:0039657">
    <property type="term" value="P:symbiont-mediated suppression of host gene expression"/>
    <property type="evidence" value="ECO:0007669"/>
    <property type="project" value="UniProtKB-KW"/>
</dbReference>
<dbReference type="GO" id="GO:0039523">
    <property type="term" value="P:symbiont-mediated suppression of host mRNA transcription via inhibition of RNA polymerase II activity"/>
    <property type="evidence" value="ECO:0007669"/>
    <property type="project" value="UniProtKB-UniRule"/>
</dbReference>
<dbReference type="GO" id="GO:0039694">
    <property type="term" value="P:viral RNA genome replication"/>
    <property type="evidence" value="ECO:0007669"/>
    <property type="project" value="InterPro"/>
</dbReference>
<dbReference type="GO" id="GO:0075523">
    <property type="term" value="P:viral translational frameshifting"/>
    <property type="evidence" value="ECO:0007669"/>
    <property type="project" value="UniProtKB-KW"/>
</dbReference>
<dbReference type="FunFam" id="3.40.91.90:FF:000001">
    <property type="entry name" value="Polymerase acidic protein"/>
    <property type="match status" value="1"/>
</dbReference>
<dbReference type="Gene3D" id="3.40.91.90">
    <property type="entry name" value="Influenza RNA-dependent RNA polymerase subunit PA, endonuclease domain"/>
    <property type="match status" value="1"/>
</dbReference>
<dbReference type="HAMAP" id="MF_04063">
    <property type="entry name" value="INFV_PA"/>
    <property type="match status" value="1"/>
</dbReference>
<dbReference type="InterPro" id="IPR037534">
    <property type="entry name" value="INFV_PA"/>
</dbReference>
<dbReference type="InterPro" id="IPR001009">
    <property type="entry name" value="PA/PA-X"/>
</dbReference>
<dbReference type="InterPro" id="IPR038372">
    <property type="entry name" value="PA/PA-X_sf"/>
</dbReference>
<dbReference type="Pfam" id="PF00603">
    <property type="entry name" value="Flu_PA"/>
    <property type="match status" value="1"/>
</dbReference>
<protein>
    <recommendedName>
        <fullName evidence="2">Polymerase acidic protein</fullName>
        <ecNumber evidence="2">3.1.-.-</ecNumber>
    </recommendedName>
    <alternativeName>
        <fullName evidence="2">RNA-directed RNA polymerase subunit P2</fullName>
    </alternativeName>
</protein>
<organismHost>
    <name type="scientific">Aves</name>
    <dbReference type="NCBI Taxonomy" id="8782"/>
</organismHost>
<organismHost>
    <name type="scientific">Homo sapiens</name>
    <name type="common">Human</name>
    <dbReference type="NCBI Taxonomy" id="9606"/>
</organismHost>